<comment type="function">
    <text evidence="1">Component of the ERMES/MDM complex, which serves as a molecular tether to connect the endoplasmic reticulum (ER) and mitochondria. Components of this complex are involved in the control of mitochondrial shape and protein biogenesis, and function in nonvesicular lipid trafficking between the ER and mitochondria. MDM34 is required for the interaction of the ER-resident membrane protein MMM1 and the outer mitochondrial membrane-resident beta-barrel protein MDM10.</text>
</comment>
<comment type="subunit">
    <text evidence="1">Component of the ER-mitochondria encounter structure (ERMES) or MDM complex, composed of MMM1, MDM10, MDM12 and MDM34.</text>
</comment>
<comment type="subcellular location">
    <subcellularLocation>
        <location evidence="1">Mitochondrion outer membrane</location>
        <topology evidence="1">Multi-pass membrane protein</topology>
    </subcellularLocation>
    <text evidence="1">The ERMES/MDM complex localizes to a few discrete foci (around 10 per single cell), that represent mitochondria-endoplasmic reticulum junctions. These foci are often found next to mtDNA nucleoids.</text>
</comment>
<comment type="domain">
    <text evidence="1">Lacks alpha-helical transmembrane segments, suggesting that it resides in the membrane via beta-sheet conformations similar to those predicted for other outer membrane proteins and porin.</text>
</comment>
<comment type="domain">
    <text evidence="1">The SMP-LTD domain is a barrel-like domain that can bind various types of glycerophospholipids in its interior and mediate their transfer between two adjacent bilayers.</text>
</comment>
<comment type="similarity">
    <text evidence="1">Belongs to the MDM34 family.</text>
</comment>
<accession>Q2H9Y1</accession>
<proteinExistence type="inferred from homology"/>
<reference key="1">
    <citation type="journal article" date="2015" name="Genome Announc.">
        <title>Draft genome sequence of the cellulolytic fungus Chaetomium globosum.</title>
        <authorList>
            <person name="Cuomo C.A."/>
            <person name="Untereiner W.A."/>
            <person name="Ma L.-J."/>
            <person name="Grabherr M."/>
            <person name="Birren B.W."/>
        </authorList>
    </citation>
    <scope>NUCLEOTIDE SEQUENCE [LARGE SCALE GENOMIC DNA]</scope>
    <source>
        <strain>ATCC 6205 / CBS 148.51 / DSM 1962 / NBRC 6347 / NRRL 1970</strain>
    </source>
</reference>
<name>MDM34_CHAGB</name>
<organism>
    <name type="scientific">Chaetomium globosum (strain ATCC 6205 / CBS 148.51 / DSM 1962 / NBRC 6347 / NRRL 1970)</name>
    <name type="common">Soil fungus</name>
    <dbReference type="NCBI Taxonomy" id="306901"/>
    <lineage>
        <taxon>Eukaryota</taxon>
        <taxon>Fungi</taxon>
        <taxon>Dikarya</taxon>
        <taxon>Ascomycota</taxon>
        <taxon>Pezizomycotina</taxon>
        <taxon>Sordariomycetes</taxon>
        <taxon>Sordariomycetidae</taxon>
        <taxon>Sordariales</taxon>
        <taxon>Chaetomiaceae</taxon>
        <taxon>Chaetomium</taxon>
    </lineage>
</organism>
<evidence type="ECO:0000255" key="1">
    <source>
        <dbReference type="HAMAP-Rule" id="MF_03105"/>
    </source>
</evidence>
<evidence type="ECO:0000256" key="2">
    <source>
        <dbReference type="SAM" id="MobiDB-lite"/>
    </source>
</evidence>
<dbReference type="EMBL" id="CH408030">
    <property type="protein sequence ID" value="EAQ91038.1"/>
    <property type="molecule type" value="Genomic_DNA"/>
</dbReference>
<dbReference type="RefSeq" id="XP_001229489.1">
    <property type="nucleotide sequence ID" value="XM_001229488.1"/>
</dbReference>
<dbReference type="SMR" id="Q2H9Y1"/>
<dbReference type="STRING" id="306901.Q2H9Y1"/>
<dbReference type="GeneID" id="4389743"/>
<dbReference type="VEuPathDB" id="FungiDB:CHGG_02973"/>
<dbReference type="eggNOG" id="ENOG502QT3W">
    <property type="taxonomic scope" value="Eukaryota"/>
</dbReference>
<dbReference type="HOGENOM" id="CLU_036502_1_0_1"/>
<dbReference type="InParanoid" id="Q2H9Y1"/>
<dbReference type="OMA" id="VFRAWSG"/>
<dbReference type="OrthoDB" id="17927at2759"/>
<dbReference type="Proteomes" id="UP000001056">
    <property type="component" value="Unassembled WGS sequence"/>
</dbReference>
<dbReference type="GO" id="GO:0032865">
    <property type="term" value="C:ERMES complex"/>
    <property type="evidence" value="ECO:0007669"/>
    <property type="project" value="UniProtKB-UniRule"/>
</dbReference>
<dbReference type="GO" id="GO:0008289">
    <property type="term" value="F:lipid binding"/>
    <property type="evidence" value="ECO:0007669"/>
    <property type="project" value="UniProtKB-KW"/>
</dbReference>
<dbReference type="GO" id="GO:0000002">
    <property type="term" value="P:mitochondrial genome maintenance"/>
    <property type="evidence" value="ECO:0007669"/>
    <property type="project" value="UniProtKB-UniRule"/>
</dbReference>
<dbReference type="GO" id="GO:1990456">
    <property type="term" value="P:mitochondrion-endoplasmic reticulum membrane tethering"/>
    <property type="evidence" value="ECO:0007669"/>
    <property type="project" value="TreeGrafter"/>
</dbReference>
<dbReference type="GO" id="GO:0015914">
    <property type="term" value="P:phospholipid transport"/>
    <property type="evidence" value="ECO:0007669"/>
    <property type="project" value="TreeGrafter"/>
</dbReference>
<dbReference type="CDD" id="cd21673">
    <property type="entry name" value="SMP_Mdm34"/>
    <property type="match status" value="1"/>
</dbReference>
<dbReference type="HAMAP" id="MF_03105">
    <property type="entry name" value="Mdm34"/>
    <property type="match status" value="1"/>
</dbReference>
<dbReference type="InterPro" id="IPR027536">
    <property type="entry name" value="Mdm34"/>
</dbReference>
<dbReference type="InterPro" id="IPR031468">
    <property type="entry name" value="SMP_LBD"/>
</dbReference>
<dbReference type="PANTHER" id="PTHR28185">
    <property type="entry name" value="MITOCHONDRIAL DISTRIBUTION AND MORPHOLOGY PROTEIN 34"/>
    <property type="match status" value="1"/>
</dbReference>
<dbReference type="PANTHER" id="PTHR28185:SF1">
    <property type="entry name" value="MITOCHONDRIAL DISTRIBUTION AND MORPHOLOGY PROTEIN 34"/>
    <property type="match status" value="1"/>
</dbReference>
<dbReference type="PROSITE" id="PS51847">
    <property type="entry name" value="SMP"/>
    <property type="match status" value="1"/>
</dbReference>
<gene>
    <name evidence="1" type="primary">MDM34</name>
    <name type="ORF">CHGG_02973</name>
</gene>
<sequence>MAFNFNWSPLTADAGFYKRARDLLTTALNKSPKPPIIVDDIIVTEFNLGSVPPDLEILEIGDLAEDRFRGIFKMCYSGDAFLTLKTRVQANPLNTCLSAKPDFTSPQPLAAASSLTIPLQITLSEFKLSAFIILVFSKQKGLTIVFRNDPLESLKVSSTFDSIQFVRDYLQRTIEGKLRDLFMDELPAIIHRLSLQLWCPDQIAKEDEEPKEADEHGVNPLATPPLDAVDLHGHLLDPAAISELSLDGGPEAQLLFSQKTLLRLSDITNSQVTSSLDTSETKDVLFRAWAGPDKVDLTNTTPLATPSLARSYSYTSPHTYTFSDNGSQDQGSLPSRPSLVHLNSATAGLSLGSGRHSKAGRKKKTRVVNLRRKAETEANSEEEEDTPETDSIEPPMSEPIMPHPILEESDEELASNKVHFGRSPDLQQQPRRPSFRAQATNAPEVPVPSVELGKTAVPPLQSSEKQAARFPSQDPAFVDSKTGRPRPRSDTSSVILEQAWIMKMAGEIARRVYDEKNGNPTFWDDQDDTPPPAYEAR</sequence>
<feature type="chain" id="PRO_0000384336" description="Mitochondrial distribution and morphology protein 34">
    <location>
        <begin position="1"/>
        <end position="537"/>
    </location>
</feature>
<feature type="domain" description="SMP-LTD" evidence="1">
    <location>
        <begin position="1"/>
        <end position="195"/>
    </location>
</feature>
<feature type="region of interest" description="Disordered" evidence="2">
    <location>
        <begin position="320"/>
        <end position="339"/>
    </location>
</feature>
<feature type="region of interest" description="Disordered" evidence="2">
    <location>
        <begin position="348"/>
        <end position="403"/>
    </location>
</feature>
<feature type="region of interest" description="Disordered" evidence="2">
    <location>
        <begin position="421"/>
        <end position="493"/>
    </location>
</feature>
<feature type="region of interest" description="Disordered" evidence="2">
    <location>
        <begin position="516"/>
        <end position="537"/>
    </location>
</feature>
<feature type="compositionally biased region" description="Basic residues" evidence="2">
    <location>
        <begin position="355"/>
        <end position="371"/>
    </location>
</feature>
<feature type="compositionally biased region" description="Acidic residues" evidence="2">
    <location>
        <begin position="378"/>
        <end position="391"/>
    </location>
</feature>
<feature type="compositionally biased region" description="Polar residues" evidence="2">
    <location>
        <begin position="425"/>
        <end position="441"/>
    </location>
</feature>
<keyword id="KW-0445">Lipid transport</keyword>
<keyword id="KW-0446">Lipid-binding</keyword>
<keyword id="KW-0472">Membrane</keyword>
<keyword id="KW-0496">Mitochondrion</keyword>
<keyword id="KW-1000">Mitochondrion outer membrane</keyword>
<keyword id="KW-1185">Reference proteome</keyword>
<keyword id="KW-0812">Transmembrane</keyword>
<keyword id="KW-1134">Transmembrane beta strand</keyword>
<keyword id="KW-0813">Transport</keyword>
<protein>
    <recommendedName>
        <fullName evidence="1">Mitochondrial distribution and morphology protein 34</fullName>
    </recommendedName>
</protein>